<keyword id="KW-0067">ATP-binding</keyword>
<keyword id="KW-0963">Cytoplasm</keyword>
<keyword id="KW-0329">Glyoxylate bypass</keyword>
<keyword id="KW-0378">Hydrolase</keyword>
<keyword id="KW-0418">Kinase</keyword>
<keyword id="KW-0547">Nucleotide-binding</keyword>
<keyword id="KW-0904">Protein phosphatase</keyword>
<keyword id="KW-0723">Serine/threonine-protein kinase</keyword>
<keyword id="KW-0808">Transferase</keyword>
<keyword id="KW-0816">Tricarboxylic acid cycle</keyword>
<name>ACEK_YERPS</name>
<comment type="function">
    <text evidence="1">Bifunctional enzyme which can phosphorylate or dephosphorylate isocitrate dehydrogenase (IDH) on a specific serine residue. This is a regulatory mechanism which enables bacteria to bypass the Krebs cycle via the glyoxylate shunt in response to the source of carbon. When bacteria are grown on glucose, IDH is fully active and unphosphorylated, but when grown on acetate or ethanol, the activity of IDH declines drastically concomitant with its phosphorylation.</text>
</comment>
<comment type="catalytic activity">
    <reaction evidence="1">
        <text>L-seryl-[isocitrate dehydrogenase] + ATP = O-phospho-L-seryl-[isocitrate dehydrogenase] + ADP + H(+)</text>
        <dbReference type="Rhea" id="RHEA:43540"/>
        <dbReference type="Rhea" id="RHEA-COMP:10605"/>
        <dbReference type="Rhea" id="RHEA-COMP:10606"/>
        <dbReference type="ChEBI" id="CHEBI:15378"/>
        <dbReference type="ChEBI" id="CHEBI:29999"/>
        <dbReference type="ChEBI" id="CHEBI:30616"/>
        <dbReference type="ChEBI" id="CHEBI:83421"/>
        <dbReference type="ChEBI" id="CHEBI:456216"/>
        <dbReference type="EC" id="2.7.11.5"/>
    </reaction>
</comment>
<comment type="subcellular location">
    <subcellularLocation>
        <location evidence="1">Cytoplasm</location>
    </subcellularLocation>
</comment>
<comment type="similarity">
    <text evidence="1">Belongs to the AceK family.</text>
</comment>
<accession>Q664W4</accession>
<reference key="1">
    <citation type="journal article" date="2004" name="Proc. Natl. Acad. Sci. U.S.A.">
        <title>Insights into the evolution of Yersinia pestis through whole-genome comparison with Yersinia pseudotuberculosis.</title>
        <authorList>
            <person name="Chain P.S.G."/>
            <person name="Carniel E."/>
            <person name="Larimer F.W."/>
            <person name="Lamerdin J."/>
            <person name="Stoutland P.O."/>
            <person name="Regala W.M."/>
            <person name="Georgescu A.M."/>
            <person name="Vergez L.M."/>
            <person name="Land M.L."/>
            <person name="Motin V.L."/>
            <person name="Brubaker R.R."/>
            <person name="Fowler J."/>
            <person name="Hinnebusch J."/>
            <person name="Marceau M."/>
            <person name="Medigue C."/>
            <person name="Simonet M."/>
            <person name="Chenal-Francisque V."/>
            <person name="Souza B."/>
            <person name="Dacheux D."/>
            <person name="Elliott J.M."/>
            <person name="Derbise A."/>
            <person name="Hauser L.J."/>
            <person name="Garcia E."/>
        </authorList>
    </citation>
    <scope>NUCLEOTIDE SEQUENCE [LARGE SCALE GENOMIC DNA]</scope>
    <source>
        <strain>IP32953</strain>
    </source>
</reference>
<protein>
    <recommendedName>
        <fullName evidence="1">Isocitrate dehydrogenase kinase/phosphatase</fullName>
        <shortName evidence="1">IDH kinase/phosphatase</shortName>
        <shortName evidence="1">IDHK/P</shortName>
        <ecNumber evidence="1">2.7.11.5</ecNumber>
        <ecNumber evidence="1">3.1.3.-</ecNumber>
    </recommendedName>
</protein>
<dbReference type="EC" id="2.7.11.5" evidence="1"/>
<dbReference type="EC" id="3.1.3.-" evidence="1"/>
<dbReference type="EMBL" id="BX936398">
    <property type="protein sequence ID" value="CAH22893.1"/>
    <property type="molecule type" value="Genomic_DNA"/>
</dbReference>
<dbReference type="RefSeq" id="WP_011193210.1">
    <property type="nucleotide sequence ID" value="NC_006155.1"/>
</dbReference>
<dbReference type="SMR" id="Q664W4"/>
<dbReference type="GeneID" id="96663147"/>
<dbReference type="KEGG" id="ypo:BZ17_2942"/>
<dbReference type="KEGG" id="yps:YPTB3655"/>
<dbReference type="PATRIC" id="fig|273123.14.peg.3076"/>
<dbReference type="Proteomes" id="UP000001011">
    <property type="component" value="Chromosome"/>
</dbReference>
<dbReference type="GO" id="GO:0005737">
    <property type="term" value="C:cytoplasm"/>
    <property type="evidence" value="ECO:0007669"/>
    <property type="project" value="UniProtKB-SubCell"/>
</dbReference>
<dbReference type="GO" id="GO:0008772">
    <property type="term" value="F:[isocitrate dehydrogenase (NADP+)] kinase activity"/>
    <property type="evidence" value="ECO:0007669"/>
    <property type="project" value="UniProtKB-UniRule"/>
</dbReference>
<dbReference type="GO" id="GO:0016208">
    <property type="term" value="F:AMP binding"/>
    <property type="evidence" value="ECO:0007669"/>
    <property type="project" value="TreeGrafter"/>
</dbReference>
<dbReference type="GO" id="GO:0005524">
    <property type="term" value="F:ATP binding"/>
    <property type="evidence" value="ECO:0007669"/>
    <property type="project" value="UniProtKB-UniRule"/>
</dbReference>
<dbReference type="GO" id="GO:0004721">
    <property type="term" value="F:phosphoprotein phosphatase activity"/>
    <property type="evidence" value="ECO:0007669"/>
    <property type="project" value="UniProtKB-KW"/>
</dbReference>
<dbReference type="GO" id="GO:0004674">
    <property type="term" value="F:protein serine/threonine kinase activity"/>
    <property type="evidence" value="ECO:0007669"/>
    <property type="project" value="UniProtKB-KW"/>
</dbReference>
<dbReference type="GO" id="GO:0006006">
    <property type="term" value="P:glucose metabolic process"/>
    <property type="evidence" value="ECO:0007669"/>
    <property type="project" value="InterPro"/>
</dbReference>
<dbReference type="GO" id="GO:0006097">
    <property type="term" value="P:glyoxylate cycle"/>
    <property type="evidence" value="ECO:0007669"/>
    <property type="project" value="UniProtKB-UniRule"/>
</dbReference>
<dbReference type="GO" id="GO:0006099">
    <property type="term" value="P:tricarboxylic acid cycle"/>
    <property type="evidence" value="ECO:0007669"/>
    <property type="project" value="UniProtKB-UniRule"/>
</dbReference>
<dbReference type="HAMAP" id="MF_00747">
    <property type="entry name" value="AceK"/>
    <property type="match status" value="1"/>
</dbReference>
<dbReference type="InterPro" id="IPR046855">
    <property type="entry name" value="AceK_kinase"/>
</dbReference>
<dbReference type="InterPro" id="IPR046854">
    <property type="entry name" value="AceK_regulatory"/>
</dbReference>
<dbReference type="InterPro" id="IPR010452">
    <property type="entry name" value="Isocitrate_DH_AceK"/>
</dbReference>
<dbReference type="NCBIfam" id="NF002804">
    <property type="entry name" value="PRK02946.1"/>
    <property type="match status" value="1"/>
</dbReference>
<dbReference type="PANTHER" id="PTHR39559">
    <property type="match status" value="1"/>
</dbReference>
<dbReference type="PANTHER" id="PTHR39559:SF1">
    <property type="entry name" value="ISOCITRATE DEHYDROGENASE KINASE_PHOSPHATASE"/>
    <property type="match status" value="1"/>
</dbReference>
<dbReference type="Pfam" id="PF06315">
    <property type="entry name" value="AceK_kinase"/>
    <property type="match status" value="1"/>
</dbReference>
<dbReference type="Pfam" id="PF20423">
    <property type="entry name" value="AceK_regulatory"/>
    <property type="match status" value="1"/>
</dbReference>
<dbReference type="PIRSF" id="PIRSF000719">
    <property type="entry name" value="AceK"/>
    <property type="match status" value="1"/>
</dbReference>
<feature type="chain" id="PRO_0000057913" description="Isocitrate dehydrogenase kinase/phosphatase">
    <location>
        <begin position="1"/>
        <end position="575"/>
    </location>
</feature>
<feature type="active site" evidence="1">
    <location>
        <position position="371"/>
    </location>
</feature>
<feature type="binding site" evidence="1">
    <location>
        <begin position="315"/>
        <end position="321"/>
    </location>
    <ligand>
        <name>ATP</name>
        <dbReference type="ChEBI" id="CHEBI:30616"/>
    </ligand>
</feature>
<feature type="binding site" evidence="1">
    <location>
        <position position="336"/>
    </location>
    <ligand>
        <name>ATP</name>
        <dbReference type="ChEBI" id="CHEBI:30616"/>
    </ligand>
</feature>
<sequence length="575" mass="67582">MVAKLEQLIAQTILQGFDAQYGRFLEVTAGAQHRFEQADWHAVQQAMKKRIHLYDHHVGLVVEQLKYITDQRHFDVEFLARVKEIYTGLLPDYPRFEIAESFFNSVYCRLFKHRDLTPDKLFVFSSQPERRFREIPRPLARDFIPKGDLSGMLQMVLNDLSLRLPWENLSRDIDYIVMAIRQAFTDEQLASAHFQIANELFYRNKAAWLVGKLRLNGDIYPFLLPIHHNESGELFIDTCLTSKAEASIVFGFARSYFMVYVPLPAAMVEWLREILPGKSTAELYTAIGCQKHGKTESYREYLAFIHQSSEQFIIAPGVKGMVMLVFTLPSFDRVFKVIKDQFAPQKEVTQARVLECYQLVKEHDRVGRMADTQEYENFVIDKHRISPELLAELQHEVPEKLEDLGDKIVIKHLYMERRMTPLNLYMEQADDQQLKDAIEEYGNAIKQLAAANIFPGDMLFKNFGVTRHGRVVFYDYDEICYMTEVNFRDIPPPRYPEDEMASEPWYSVSPNDVFPEEFRHFLCSDRKVRHFFEEMHGDLFQASYWRGLQQRIRDGHVEDVFAYRRKQRFSQRALN</sequence>
<gene>
    <name evidence="1" type="primary">aceK</name>
    <name type="ordered locus">YPTB3655</name>
</gene>
<evidence type="ECO:0000255" key="1">
    <source>
        <dbReference type="HAMAP-Rule" id="MF_00747"/>
    </source>
</evidence>
<organism>
    <name type="scientific">Yersinia pseudotuberculosis serotype I (strain IP32953)</name>
    <dbReference type="NCBI Taxonomy" id="273123"/>
    <lineage>
        <taxon>Bacteria</taxon>
        <taxon>Pseudomonadati</taxon>
        <taxon>Pseudomonadota</taxon>
        <taxon>Gammaproteobacteria</taxon>
        <taxon>Enterobacterales</taxon>
        <taxon>Yersiniaceae</taxon>
        <taxon>Yersinia</taxon>
    </lineage>
</organism>
<proteinExistence type="inferred from homology"/>